<reference key="1">
    <citation type="journal article" date="2007" name="J. Bacteriol.">
        <title>The complete genome sequence of Campylobacter jejuni strain 81116 (NCTC11828).</title>
        <authorList>
            <person name="Pearson B.M."/>
            <person name="Gaskin D.J.H."/>
            <person name="Segers R.P.A.M."/>
            <person name="Wells J.M."/>
            <person name="Nuijten P.J.M."/>
            <person name="van Vliet A.H.M."/>
        </authorList>
    </citation>
    <scope>NUCLEOTIDE SEQUENCE [LARGE SCALE GENOMIC DNA]</scope>
    <source>
        <strain>81116 / NCTC 11828</strain>
    </source>
</reference>
<feature type="signal peptide" evidence="1">
    <location>
        <begin position="1"/>
        <end position="16"/>
    </location>
</feature>
<feature type="chain" id="PRO_1000072286" description="Flagellar P-ring protein">
    <location>
        <begin position="17"/>
        <end position="348"/>
    </location>
</feature>
<evidence type="ECO:0000255" key="1">
    <source>
        <dbReference type="HAMAP-Rule" id="MF_00416"/>
    </source>
</evidence>
<accession>A8FNC9</accession>
<keyword id="KW-0975">Bacterial flagellum</keyword>
<keyword id="KW-0574">Periplasm</keyword>
<keyword id="KW-0732">Signal</keyword>
<proteinExistence type="inferred from homology"/>
<organism>
    <name type="scientific">Campylobacter jejuni subsp. jejuni serotype O:6 (strain 81116 / NCTC 11828)</name>
    <dbReference type="NCBI Taxonomy" id="407148"/>
    <lineage>
        <taxon>Bacteria</taxon>
        <taxon>Pseudomonadati</taxon>
        <taxon>Campylobacterota</taxon>
        <taxon>Epsilonproteobacteria</taxon>
        <taxon>Campylobacterales</taxon>
        <taxon>Campylobacteraceae</taxon>
        <taxon>Campylobacter</taxon>
    </lineage>
</organism>
<protein>
    <recommendedName>
        <fullName evidence="1">Flagellar P-ring protein</fullName>
    </recommendedName>
    <alternativeName>
        <fullName evidence="1">Basal body P-ring protein</fullName>
    </alternativeName>
</protein>
<sequence length="348" mass="36981">MRVLTIFLLFMTSIFAVQIKDVANTVGVRDNQLIGYGLVVGLNGSGDGTSSKFTLQSISNLLQGMNIKVDPNDIKSKNTAAVMVTAKLPAFAKSGDKLDITVSSMGDAKSLQGGTLLLTALRGIDGEIYAIAQGSISTGGLTPRPGGAGSHSTAATVMGGANVEREIPQNFSQNNDLTLSLKVADFKTANDIERVLNTVFGEEVAKAIDSRTVKLKKPEDLSNVDFMARVLEQDIAYKPQSKVIIDERTGTVIAGVDVEVEPVLITHKDITIKIDPNNNAVANQNEIDMKDGGFVDPSSNTLRINNAKSTVANIARMLNKLGATPNDIIAIMENLKRAGAINADLEII</sequence>
<dbReference type="EMBL" id="CP000814">
    <property type="protein sequence ID" value="ABV52966.1"/>
    <property type="molecule type" value="Genomic_DNA"/>
</dbReference>
<dbReference type="RefSeq" id="WP_002826014.1">
    <property type="nucleotide sequence ID" value="NC_009839.1"/>
</dbReference>
<dbReference type="SMR" id="A8FNC9"/>
<dbReference type="KEGG" id="cju:C8J_1368"/>
<dbReference type="HOGENOM" id="CLU_045235_1_0_7"/>
<dbReference type="GO" id="GO:0009428">
    <property type="term" value="C:bacterial-type flagellum basal body, distal rod, P ring"/>
    <property type="evidence" value="ECO:0007669"/>
    <property type="project" value="InterPro"/>
</dbReference>
<dbReference type="GO" id="GO:0030288">
    <property type="term" value="C:outer membrane-bounded periplasmic space"/>
    <property type="evidence" value="ECO:0007669"/>
    <property type="project" value="InterPro"/>
</dbReference>
<dbReference type="GO" id="GO:0005198">
    <property type="term" value="F:structural molecule activity"/>
    <property type="evidence" value="ECO:0007669"/>
    <property type="project" value="InterPro"/>
</dbReference>
<dbReference type="GO" id="GO:0071973">
    <property type="term" value="P:bacterial-type flagellum-dependent cell motility"/>
    <property type="evidence" value="ECO:0007669"/>
    <property type="project" value="InterPro"/>
</dbReference>
<dbReference type="HAMAP" id="MF_00416">
    <property type="entry name" value="FlgI"/>
    <property type="match status" value="1"/>
</dbReference>
<dbReference type="InterPro" id="IPR001782">
    <property type="entry name" value="Flag_FlgI"/>
</dbReference>
<dbReference type="NCBIfam" id="NF003676">
    <property type="entry name" value="PRK05303.1"/>
    <property type="match status" value="1"/>
</dbReference>
<dbReference type="PANTHER" id="PTHR30381">
    <property type="entry name" value="FLAGELLAR P-RING PERIPLASMIC PROTEIN FLGI"/>
    <property type="match status" value="1"/>
</dbReference>
<dbReference type="PANTHER" id="PTHR30381:SF0">
    <property type="entry name" value="FLAGELLAR P-RING PROTEIN"/>
    <property type="match status" value="1"/>
</dbReference>
<dbReference type="Pfam" id="PF02119">
    <property type="entry name" value="FlgI"/>
    <property type="match status" value="1"/>
</dbReference>
<dbReference type="PRINTS" id="PR01010">
    <property type="entry name" value="FLGPRINGFLGI"/>
</dbReference>
<gene>
    <name evidence="1" type="primary">flgI</name>
    <name type="ordered locus">C8J_1368</name>
</gene>
<comment type="function">
    <text evidence="1">Assembles around the rod to form the L-ring and probably protects the motor/basal body from shearing forces during rotation.</text>
</comment>
<comment type="subunit">
    <text evidence="1">The basal body constitutes a major portion of the flagellar organelle and consists of four rings (L,P,S, and M) mounted on a central rod.</text>
</comment>
<comment type="subcellular location">
    <subcellularLocation>
        <location evidence="1">Periplasm</location>
    </subcellularLocation>
    <subcellularLocation>
        <location evidence="1">Bacterial flagellum basal body</location>
    </subcellularLocation>
</comment>
<comment type="similarity">
    <text evidence="1">Belongs to the FlgI family.</text>
</comment>
<name>FLGI_CAMJ8</name>